<gene>
    <name evidence="6" type="primary">Zbtb11</name>
</gene>
<protein>
    <recommendedName>
        <fullName evidence="5">Zinc finger and BTB domain-containing protein 11</fullName>
    </recommendedName>
</protein>
<evidence type="ECO:0000250" key="1">
    <source>
        <dbReference type="UniProtKB" id="O95625"/>
    </source>
</evidence>
<evidence type="ECO:0000255" key="2">
    <source>
        <dbReference type="PROSITE-ProRule" id="PRU00037"/>
    </source>
</evidence>
<evidence type="ECO:0000255" key="3">
    <source>
        <dbReference type="PROSITE-ProRule" id="PRU00042"/>
    </source>
</evidence>
<evidence type="ECO:0000256" key="4">
    <source>
        <dbReference type="SAM" id="MobiDB-lite"/>
    </source>
</evidence>
<evidence type="ECO:0000305" key="5"/>
<evidence type="ECO:0000312" key="6">
    <source>
        <dbReference type="MGI" id="MGI:2443876"/>
    </source>
</evidence>
<proteinExistence type="evidence at transcript level"/>
<name>ZBT11_MOUSE</name>
<organism>
    <name type="scientific">Mus musculus</name>
    <name type="common">Mouse</name>
    <dbReference type="NCBI Taxonomy" id="10090"/>
    <lineage>
        <taxon>Eukaryota</taxon>
        <taxon>Metazoa</taxon>
        <taxon>Chordata</taxon>
        <taxon>Craniata</taxon>
        <taxon>Vertebrata</taxon>
        <taxon>Euteleostomi</taxon>
        <taxon>Mammalia</taxon>
        <taxon>Eutheria</taxon>
        <taxon>Euarchontoglires</taxon>
        <taxon>Glires</taxon>
        <taxon>Rodentia</taxon>
        <taxon>Myomorpha</taxon>
        <taxon>Muroidea</taxon>
        <taxon>Muridae</taxon>
        <taxon>Murinae</taxon>
        <taxon>Mus</taxon>
        <taxon>Mus</taxon>
    </lineage>
</organism>
<keyword id="KW-0238">DNA-binding</keyword>
<keyword id="KW-0479">Metal-binding</keyword>
<keyword id="KW-0539">Nucleus</keyword>
<keyword id="KW-1185">Reference proteome</keyword>
<keyword id="KW-0677">Repeat</keyword>
<keyword id="KW-0804">Transcription</keyword>
<keyword id="KW-0805">Transcription regulation</keyword>
<keyword id="KW-0862">Zinc</keyword>
<keyword id="KW-0863">Zinc-finger</keyword>
<comment type="function">
    <text evidence="1">May be involved in transcriptional regulation.</text>
</comment>
<comment type="subcellular location">
    <subcellularLocation>
        <location evidence="1">Nucleus</location>
        <location evidence="1">Nucleolus</location>
    </subcellularLocation>
</comment>
<sequence length="1050" mass="118566">MSSEESYRAILRYLTNEREPYAPGTEGNVKRKIRKAAACYVVRGGTLYYQRRQRHRKTFAELEVVLQPERRQGLIEAAHLGPGGTHHTRHQTWHDLSKTYWWRGILKQVKDYIKQCSKCQEKLDRSRPISDASEMLEELGLDLDSGEESNESEDDLSNFTSPPSTASKSSKKKPVSKHELVFVDTKGVVKRSSPKHCQAVLKQLNEQRLSNQFCDVTLLIEGEEYKAHKSVLSANSEYFRDLFIEKGAVSSHEAVVDLSGFCKASFLPLLEFAYTSVLSFDFCSMADVAVLARHLFMSEVLEICESVHKLMEEKQLTVYKKGEVQTVASTQDLAAHNGTTTPPGTRNEATTTLSGELGHCEIVLLVNGELPEAEQNGEPEQQPAPQASPEAEASVSPVEGIPEPHPEMGTASLAKESNQPESAVTREDGIVASVHPKISKENVTNASQEDSDTGNDTSPEDIGAKDCPDHSQSPGQPSKDEDTLTEATEKTDSGPDDDTYRSRLRQRSVNEGGYIRLHKGMEKKLQKRKAISKSAVQQVAQKLVQRGKKMKQPKRDAKESTEETAHKCGECGMVFPRRYAFIMHTLKHERARDYKCPLCKKQFQYSASLRAHLIRHTRKEAPTSSSSNSTSTEASGGSSEKGRTKREFICSICGRTLPKLYSLRIHMLKHTGVKPHACQVCGKTFIYKHGLKLHQSLHQSQKQFQCELCVKSFVTKRSLQEHMSIHTGESKYFCSICGKSFHRGSGLSKHLKKHQPKPEVRGYHCTQCEKSFFEARDLRQHMNKHLGVKPFQCQFCDKCYSWKKDWYSHVKSHSVTEPYRCNICGKEFYEKALFRRHVKKATHGKKGRAKQNLERVCDQCGRKFTQLREYRRHMNNHEGVKPFECLTCGVAWADARSLKRHVRTHTGERPYVCPVCSEAYIDARTLRKHMTKFHRDYVPCKIMLEKDTLQFHNQGTQVEHAVSILTADMQEQESSGPQELETVVVTGETMEVLEAVAATEECPSVSTLSDQSIMQVVNYVLAQQQGQKLSEVAEAIQTVEVEVAHMPEAE</sequence>
<reference key="1">
    <citation type="journal article" date="2009" name="PLoS Biol.">
        <title>Lineage-specific biology revealed by a finished genome assembly of the mouse.</title>
        <authorList>
            <person name="Church D.M."/>
            <person name="Goodstadt L."/>
            <person name="Hillier L.W."/>
            <person name="Zody M.C."/>
            <person name="Goldstein S."/>
            <person name="She X."/>
            <person name="Bult C.J."/>
            <person name="Agarwala R."/>
            <person name="Cherry J.L."/>
            <person name="DiCuccio M."/>
            <person name="Hlavina W."/>
            <person name="Kapustin Y."/>
            <person name="Meric P."/>
            <person name="Maglott D."/>
            <person name="Birtle Z."/>
            <person name="Marques A.C."/>
            <person name="Graves T."/>
            <person name="Zhou S."/>
            <person name="Teague B."/>
            <person name="Potamousis K."/>
            <person name="Churas C."/>
            <person name="Place M."/>
            <person name="Herschleb J."/>
            <person name="Runnheim R."/>
            <person name="Forrest D."/>
            <person name="Amos-Landgraf J."/>
            <person name="Schwartz D.C."/>
            <person name="Cheng Z."/>
            <person name="Lindblad-Toh K."/>
            <person name="Eichler E.E."/>
            <person name="Ponting C.P."/>
        </authorList>
    </citation>
    <scope>NUCLEOTIDE SEQUENCE [LARGE SCALE GENOMIC DNA]</scope>
    <source>
        <strain>C57BL/6J</strain>
    </source>
</reference>
<reference key="2">
    <citation type="submission" date="2005-07" db="EMBL/GenBank/DDBJ databases">
        <authorList>
            <person name="Mural R.J."/>
            <person name="Adams M.D."/>
            <person name="Myers E.W."/>
            <person name="Smith H.O."/>
            <person name="Venter J.C."/>
        </authorList>
    </citation>
    <scope>NUCLEOTIDE SEQUENCE [LARGE SCALE GENOMIC DNA]</scope>
</reference>
<reference key="3">
    <citation type="journal article" date="2005" name="Science">
        <title>The transcriptional landscape of the mammalian genome.</title>
        <authorList>
            <person name="Carninci P."/>
            <person name="Kasukawa T."/>
            <person name="Katayama S."/>
            <person name="Gough J."/>
            <person name="Frith M.C."/>
            <person name="Maeda N."/>
            <person name="Oyama R."/>
            <person name="Ravasi T."/>
            <person name="Lenhard B."/>
            <person name="Wells C."/>
            <person name="Kodzius R."/>
            <person name="Shimokawa K."/>
            <person name="Bajic V.B."/>
            <person name="Brenner S.E."/>
            <person name="Batalov S."/>
            <person name="Forrest A.R."/>
            <person name="Zavolan M."/>
            <person name="Davis M.J."/>
            <person name="Wilming L.G."/>
            <person name="Aidinis V."/>
            <person name="Allen J.E."/>
            <person name="Ambesi-Impiombato A."/>
            <person name="Apweiler R."/>
            <person name="Aturaliya R.N."/>
            <person name="Bailey T.L."/>
            <person name="Bansal M."/>
            <person name="Baxter L."/>
            <person name="Beisel K.W."/>
            <person name="Bersano T."/>
            <person name="Bono H."/>
            <person name="Chalk A.M."/>
            <person name="Chiu K.P."/>
            <person name="Choudhary V."/>
            <person name="Christoffels A."/>
            <person name="Clutterbuck D.R."/>
            <person name="Crowe M.L."/>
            <person name="Dalla E."/>
            <person name="Dalrymple B.P."/>
            <person name="de Bono B."/>
            <person name="Della Gatta G."/>
            <person name="di Bernardo D."/>
            <person name="Down T."/>
            <person name="Engstrom P."/>
            <person name="Fagiolini M."/>
            <person name="Faulkner G."/>
            <person name="Fletcher C.F."/>
            <person name="Fukushima T."/>
            <person name="Furuno M."/>
            <person name="Futaki S."/>
            <person name="Gariboldi M."/>
            <person name="Georgii-Hemming P."/>
            <person name="Gingeras T.R."/>
            <person name="Gojobori T."/>
            <person name="Green R.E."/>
            <person name="Gustincich S."/>
            <person name="Harbers M."/>
            <person name="Hayashi Y."/>
            <person name="Hensch T.K."/>
            <person name="Hirokawa N."/>
            <person name="Hill D."/>
            <person name="Huminiecki L."/>
            <person name="Iacono M."/>
            <person name="Ikeo K."/>
            <person name="Iwama A."/>
            <person name="Ishikawa T."/>
            <person name="Jakt M."/>
            <person name="Kanapin A."/>
            <person name="Katoh M."/>
            <person name="Kawasawa Y."/>
            <person name="Kelso J."/>
            <person name="Kitamura H."/>
            <person name="Kitano H."/>
            <person name="Kollias G."/>
            <person name="Krishnan S.P."/>
            <person name="Kruger A."/>
            <person name="Kummerfeld S.K."/>
            <person name="Kurochkin I.V."/>
            <person name="Lareau L.F."/>
            <person name="Lazarevic D."/>
            <person name="Lipovich L."/>
            <person name="Liu J."/>
            <person name="Liuni S."/>
            <person name="McWilliam S."/>
            <person name="Madan Babu M."/>
            <person name="Madera M."/>
            <person name="Marchionni L."/>
            <person name="Matsuda H."/>
            <person name="Matsuzawa S."/>
            <person name="Miki H."/>
            <person name="Mignone F."/>
            <person name="Miyake S."/>
            <person name="Morris K."/>
            <person name="Mottagui-Tabar S."/>
            <person name="Mulder N."/>
            <person name="Nakano N."/>
            <person name="Nakauchi H."/>
            <person name="Ng P."/>
            <person name="Nilsson R."/>
            <person name="Nishiguchi S."/>
            <person name="Nishikawa S."/>
            <person name="Nori F."/>
            <person name="Ohara O."/>
            <person name="Okazaki Y."/>
            <person name="Orlando V."/>
            <person name="Pang K.C."/>
            <person name="Pavan W.J."/>
            <person name="Pavesi G."/>
            <person name="Pesole G."/>
            <person name="Petrovsky N."/>
            <person name="Piazza S."/>
            <person name="Reed J."/>
            <person name="Reid J.F."/>
            <person name="Ring B.Z."/>
            <person name="Ringwald M."/>
            <person name="Rost B."/>
            <person name="Ruan Y."/>
            <person name="Salzberg S.L."/>
            <person name="Sandelin A."/>
            <person name="Schneider C."/>
            <person name="Schoenbach C."/>
            <person name="Sekiguchi K."/>
            <person name="Semple C.A."/>
            <person name="Seno S."/>
            <person name="Sessa L."/>
            <person name="Sheng Y."/>
            <person name="Shibata Y."/>
            <person name="Shimada H."/>
            <person name="Shimada K."/>
            <person name="Silva D."/>
            <person name="Sinclair B."/>
            <person name="Sperling S."/>
            <person name="Stupka E."/>
            <person name="Sugiura K."/>
            <person name="Sultana R."/>
            <person name="Takenaka Y."/>
            <person name="Taki K."/>
            <person name="Tammoja K."/>
            <person name="Tan S.L."/>
            <person name="Tang S."/>
            <person name="Taylor M.S."/>
            <person name="Tegner J."/>
            <person name="Teichmann S.A."/>
            <person name="Ueda H.R."/>
            <person name="van Nimwegen E."/>
            <person name="Verardo R."/>
            <person name="Wei C.L."/>
            <person name="Yagi K."/>
            <person name="Yamanishi H."/>
            <person name="Zabarovsky E."/>
            <person name="Zhu S."/>
            <person name="Zimmer A."/>
            <person name="Hide W."/>
            <person name="Bult C."/>
            <person name="Grimmond S.M."/>
            <person name="Teasdale R.D."/>
            <person name="Liu E.T."/>
            <person name="Brusic V."/>
            <person name="Quackenbush J."/>
            <person name="Wahlestedt C."/>
            <person name="Mattick J.S."/>
            <person name="Hume D.A."/>
            <person name="Kai C."/>
            <person name="Sasaki D."/>
            <person name="Tomaru Y."/>
            <person name="Fukuda S."/>
            <person name="Kanamori-Katayama M."/>
            <person name="Suzuki M."/>
            <person name="Aoki J."/>
            <person name="Arakawa T."/>
            <person name="Iida J."/>
            <person name="Imamura K."/>
            <person name="Itoh M."/>
            <person name="Kato T."/>
            <person name="Kawaji H."/>
            <person name="Kawagashira N."/>
            <person name="Kawashima T."/>
            <person name="Kojima M."/>
            <person name="Kondo S."/>
            <person name="Konno H."/>
            <person name="Nakano K."/>
            <person name="Ninomiya N."/>
            <person name="Nishio T."/>
            <person name="Okada M."/>
            <person name="Plessy C."/>
            <person name="Shibata K."/>
            <person name="Shiraki T."/>
            <person name="Suzuki S."/>
            <person name="Tagami M."/>
            <person name="Waki K."/>
            <person name="Watahiki A."/>
            <person name="Okamura-Oho Y."/>
            <person name="Suzuki H."/>
            <person name="Kawai J."/>
            <person name="Hayashizaki Y."/>
        </authorList>
    </citation>
    <scope>NUCLEOTIDE SEQUENCE [LARGE SCALE MRNA] OF 355-842</scope>
    <source>
        <strain>C57BL/6J</strain>
        <tissue>Epididymis</tissue>
    </source>
</reference>
<feature type="chain" id="PRO_0000447988" description="Zinc finger and BTB domain-containing protein 11">
    <location>
        <begin position="1"/>
        <end position="1050"/>
    </location>
</feature>
<feature type="domain" description="BTB" evidence="2">
    <location>
        <begin position="214"/>
        <end position="282"/>
    </location>
</feature>
<feature type="zinc finger region" description="C2H2-type 1" evidence="3">
    <location>
        <begin position="566"/>
        <end position="588"/>
    </location>
</feature>
<feature type="zinc finger region" description="C2H2-type 2" evidence="3">
    <location>
        <begin position="594"/>
        <end position="616"/>
    </location>
</feature>
<feature type="zinc finger region" description="C2H2-type 3" evidence="3">
    <location>
        <begin position="648"/>
        <end position="670"/>
    </location>
</feature>
<feature type="zinc finger region" description="C2H2-type 4" evidence="3">
    <location>
        <begin position="676"/>
        <end position="698"/>
    </location>
</feature>
<feature type="zinc finger region" description="C2H2-type 5" evidence="3">
    <location>
        <begin position="704"/>
        <end position="726"/>
    </location>
</feature>
<feature type="zinc finger region" description="C2H2-type 6" evidence="3">
    <location>
        <begin position="732"/>
        <end position="754"/>
    </location>
</feature>
<feature type="zinc finger region" description="C2H2-type 7" evidence="3">
    <location>
        <begin position="763"/>
        <end position="785"/>
    </location>
</feature>
<feature type="zinc finger region" description="C2H2-type 8" evidence="3">
    <location>
        <begin position="791"/>
        <end position="813"/>
    </location>
</feature>
<feature type="zinc finger region" description="C2H2-type 9" evidence="3">
    <location>
        <begin position="819"/>
        <end position="843"/>
    </location>
</feature>
<feature type="zinc finger region" description="C2H2-type 10" evidence="3">
    <location>
        <begin position="855"/>
        <end position="877"/>
    </location>
</feature>
<feature type="zinc finger region" description="C2H2-type 11" evidence="3">
    <location>
        <begin position="883"/>
        <end position="905"/>
    </location>
</feature>
<feature type="zinc finger region" description="C2H2-type 12" evidence="3">
    <location>
        <begin position="911"/>
        <end position="934"/>
    </location>
</feature>
<feature type="region of interest" description="Disordered" evidence="4">
    <location>
        <begin position="143"/>
        <end position="173"/>
    </location>
</feature>
<feature type="region of interest" description="Disordered" evidence="4">
    <location>
        <begin position="373"/>
        <end position="514"/>
    </location>
</feature>
<feature type="region of interest" description="Disordered" evidence="4">
    <location>
        <begin position="543"/>
        <end position="563"/>
    </location>
</feature>
<feature type="region of interest" description="Disordered" evidence="4">
    <location>
        <begin position="617"/>
        <end position="641"/>
    </location>
</feature>
<feature type="compositionally biased region" description="Acidic residues" evidence="4">
    <location>
        <begin position="143"/>
        <end position="156"/>
    </location>
</feature>
<feature type="compositionally biased region" description="Low complexity" evidence="4">
    <location>
        <begin position="157"/>
        <end position="168"/>
    </location>
</feature>
<feature type="compositionally biased region" description="Low complexity" evidence="4">
    <location>
        <begin position="378"/>
        <end position="399"/>
    </location>
</feature>
<feature type="compositionally biased region" description="Basic and acidic residues" evidence="4">
    <location>
        <begin position="478"/>
        <end position="501"/>
    </location>
</feature>
<feature type="compositionally biased region" description="Basic and acidic residues" evidence="4">
    <location>
        <begin position="553"/>
        <end position="563"/>
    </location>
</feature>
<feature type="compositionally biased region" description="Low complexity" evidence="4">
    <location>
        <begin position="623"/>
        <end position="638"/>
    </location>
</feature>
<dbReference type="EMBL" id="AC171202">
    <property type="status" value="NOT_ANNOTATED_CDS"/>
    <property type="molecule type" value="Genomic_DNA"/>
</dbReference>
<dbReference type="EMBL" id="CH466521">
    <property type="protein sequence ID" value="EDK98149.1"/>
    <property type="molecule type" value="Genomic_DNA"/>
</dbReference>
<dbReference type="EMBL" id="AK033794">
    <property type="protein sequence ID" value="BAC28477.1"/>
    <property type="molecule type" value="mRNA"/>
</dbReference>
<dbReference type="CCDS" id="CCDS49874.1"/>
<dbReference type="RefSeq" id="NP_766614.2">
    <property type="nucleotide sequence ID" value="NM_173026.2"/>
</dbReference>
<dbReference type="SMR" id="G5E8B9"/>
<dbReference type="FunCoup" id="G5E8B9">
    <property type="interactions" value="3318"/>
</dbReference>
<dbReference type="STRING" id="10090.ENSMUSP00000056923"/>
<dbReference type="iPTMnet" id="G5E8B9"/>
<dbReference type="PhosphoSitePlus" id="G5E8B9"/>
<dbReference type="jPOST" id="G5E8B9"/>
<dbReference type="PaxDb" id="10090-ENSMUSP00000056923"/>
<dbReference type="PeptideAtlas" id="G5E8B9"/>
<dbReference type="ProteomicsDB" id="342855"/>
<dbReference type="Pumba" id="G5E8B9"/>
<dbReference type="Antibodypedia" id="15941">
    <property type="antibodies" value="124 antibodies from 23 providers"/>
</dbReference>
<dbReference type="Ensembl" id="ENSMUST00000050248.9">
    <property type="protein sequence ID" value="ENSMUSP00000056923.8"/>
    <property type="gene ID" value="ENSMUSG00000022601.12"/>
</dbReference>
<dbReference type="GeneID" id="271377"/>
<dbReference type="KEGG" id="mmu:271377"/>
<dbReference type="UCSC" id="uc012ago.1">
    <property type="organism name" value="mouse"/>
</dbReference>
<dbReference type="AGR" id="MGI:2443876"/>
<dbReference type="CTD" id="27107"/>
<dbReference type="MGI" id="MGI:2443876">
    <property type="gene designation" value="Zbtb11"/>
</dbReference>
<dbReference type="VEuPathDB" id="HostDB:ENSMUSG00000022601"/>
<dbReference type="eggNOG" id="KOG1721">
    <property type="taxonomic scope" value="Eukaryota"/>
</dbReference>
<dbReference type="GeneTree" id="ENSGT00900000141090"/>
<dbReference type="HOGENOM" id="CLU_010706_0_0_1"/>
<dbReference type="InParanoid" id="G5E8B9"/>
<dbReference type="OMA" id="RYAFIMH"/>
<dbReference type="OrthoDB" id="6077919at2759"/>
<dbReference type="PhylomeDB" id="G5E8B9"/>
<dbReference type="BioGRID-ORCS" id="271377">
    <property type="hits" value="21 hits in 73 CRISPR screens"/>
</dbReference>
<dbReference type="CD-CODE" id="CE726F99">
    <property type="entry name" value="Postsynaptic density"/>
</dbReference>
<dbReference type="ChiTaRS" id="Zbtb11">
    <property type="organism name" value="mouse"/>
</dbReference>
<dbReference type="PRO" id="PR:G5E8B9"/>
<dbReference type="Proteomes" id="UP000000589">
    <property type="component" value="Chromosome 16"/>
</dbReference>
<dbReference type="RNAct" id="G5E8B9">
    <property type="molecule type" value="protein"/>
</dbReference>
<dbReference type="Bgee" id="ENSMUSG00000022601">
    <property type="expression patterns" value="Expressed in cleaving embryo and 238 other cell types or tissues"/>
</dbReference>
<dbReference type="GO" id="GO:0005730">
    <property type="term" value="C:nucleolus"/>
    <property type="evidence" value="ECO:0007669"/>
    <property type="project" value="UniProtKB-SubCell"/>
</dbReference>
<dbReference type="GO" id="GO:0005654">
    <property type="term" value="C:nucleoplasm"/>
    <property type="evidence" value="ECO:0007669"/>
    <property type="project" value="Ensembl"/>
</dbReference>
<dbReference type="GO" id="GO:0005634">
    <property type="term" value="C:nucleus"/>
    <property type="evidence" value="ECO:0000250"/>
    <property type="project" value="UniProtKB"/>
</dbReference>
<dbReference type="GO" id="GO:0003677">
    <property type="term" value="F:DNA binding"/>
    <property type="evidence" value="ECO:0007669"/>
    <property type="project" value="UniProtKB-KW"/>
</dbReference>
<dbReference type="GO" id="GO:0008270">
    <property type="term" value="F:zinc ion binding"/>
    <property type="evidence" value="ECO:0007669"/>
    <property type="project" value="UniProtKB-KW"/>
</dbReference>
<dbReference type="CDD" id="cd18202">
    <property type="entry name" value="BTB_POZ_ZBTB11"/>
    <property type="match status" value="1"/>
</dbReference>
<dbReference type="FunFam" id="3.30.160.60:FF:000633">
    <property type="entry name" value="Zinc finger and BTB domain containing 11"/>
    <property type="match status" value="1"/>
</dbReference>
<dbReference type="FunFam" id="3.30.160.60:FF:001553">
    <property type="entry name" value="Zinc finger and BTB domain containing 11"/>
    <property type="match status" value="1"/>
</dbReference>
<dbReference type="FunFam" id="1.10.340.70:FF:000002">
    <property type="entry name" value="Zinc finger and BTB domain-containing protein 11"/>
    <property type="match status" value="1"/>
</dbReference>
<dbReference type="FunFam" id="3.30.160.60:FF:000971">
    <property type="entry name" value="Zinc finger and BTB domain-containing protein 11"/>
    <property type="match status" value="1"/>
</dbReference>
<dbReference type="FunFam" id="3.30.160.60:FF:000997">
    <property type="entry name" value="Zinc finger and BTB domain-containing protein 11"/>
    <property type="match status" value="1"/>
</dbReference>
<dbReference type="FunFam" id="3.30.160.60:FF:001072">
    <property type="entry name" value="zinc finger and BTB domain-containing protein 11"/>
    <property type="match status" value="1"/>
</dbReference>
<dbReference type="FunFam" id="3.30.160.60:FF:001086">
    <property type="entry name" value="zinc finger and BTB domain-containing protein 11"/>
    <property type="match status" value="1"/>
</dbReference>
<dbReference type="FunFam" id="3.30.710.10:FF:000070">
    <property type="entry name" value="zinc finger and BTB domain-containing protein 11"/>
    <property type="match status" value="1"/>
</dbReference>
<dbReference type="Gene3D" id="1.10.340.70">
    <property type="match status" value="1"/>
</dbReference>
<dbReference type="Gene3D" id="3.30.160.60">
    <property type="entry name" value="Classic Zinc Finger"/>
    <property type="match status" value="10"/>
</dbReference>
<dbReference type="Gene3D" id="3.30.710.10">
    <property type="entry name" value="Potassium Channel Kv1.1, Chain A"/>
    <property type="match status" value="1"/>
</dbReference>
<dbReference type="InterPro" id="IPR000210">
    <property type="entry name" value="BTB/POZ_dom"/>
</dbReference>
<dbReference type="InterPro" id="IPR041588">
    <property type="entry name" value="Integrase_H2C2"/>
</dbReference>
<dbReference type="InterPro" id="IPR011333">
    <property type="entry name" value="SKP1/BTB/POZ_sf"/>
</dbReference>
<dbReference type="InterPro" id="IPR048060">
    <property type="entry name" value="ZBTB11_BTB_POZ"/>
</dbReference>
<dbReference type="InterPro" id="IPR036236">
    <property type="entry name" value="Znf_C2H2_sf"/>
</dbReference>
<dbReference type="InterPro" id="IPR013087">
    <property type="entry name" value="Znf_C2H2_type"/>
</dbReference>
<dbReference type="PANTHER" id="PTHR24394:SF41">
    <property type="entry name" value="ZINC FINGER AND BTB DOMAIN CONTAINING 11"/>
    <property type="match status" value="1"/>
</dbReference>
<dbReference type="PANTHER" id="PTHR24394">
    <property type="entry name" value="ZINC FINGER PROTEIN"/>
    <property type="match status" value="1"/>
</dbReference>
<dbReference type="Pfam" id="PF00651">
    <property type="entry name" value="BTB"/>
    <property type="match status" value="1"/>
</dbReference>
<dbReference type="Pfam" id="PF17921">
    <property type="entry name" value="Integrase_H2C2"/>
    <property type="match status" value="1"/>
</dbReference>
<dbReference type="Pfam" id="PF00096">
    <property type="entry name" value="zf-C2H2"/>
    <property type="match status" value="8"/>
</dbReference>
<dbReference type="Pfam" id="PF13912">
    <property type="entry name" value="zf-C2H2_6"/>
    <property type="match status" value="2"/>
</dbReference>
<dbReference type="SMART" id="SM00225">
    <property type="entry name" value="BTB"/>
    <property type="match status" value="1"/>
</dbReference>
<dbReference type="SMART" id="SM00355">
    <property type="entry name" value="ZnF_C2H2"/>
    <property type="match status" value="12"/>
</dbReference>
<dbReference type="SUPFAM" id="SSF57667">
    <property type="entry name" value="beta-beta-alpha zinc fingers"/>
    <property type="match status" value="7"/>
</dbReference>
<dbReference type="SUPFAM" id="SSF54695">
    <property type="entry name" value="POZ domain"/>
    <property type="match status" value="1"/>
</dbReference>
<dbReference type="PROSITE" id="PS50097">
    <property type="entry name" value="BTB"/>
    <property type="match status" value="1"/>
</dbReference>
<dbReference type="PROSITE" id="PS00028">
    <property type="entry name" value="ZINC_FINGER_C2H2_1"/>
    <property type="match status" value="12"/>
</dbReference>
<dbReference type="PROSITE" id="PS50157">
    <property type="entry name" value="ZINC_FINGER_C2H2_2"/>
    <property type="match status" value="12"/>
</dbReference>
<accession>G5E8B9</accession>
<accession>Q8BZQ5</accession>